<name>CSPL9_SELML</name>
<comment type="subunit">
    <text evidence="1">Homodimer and heterodimers.</text>
</comment>
<comment type="subcellular location">
    <subcellularLocation>
        <location evidence="1">Cell membrane</location>
        <topology evidence="1">Multi-pass membrane protein</topology>
    </subcellularLocation>
</comment>
<comment type="similarity">
    <text evidence="3">Belongs to the Casparian strip membrane proteins (CASP) family.</text>
</comment>
<comment type="sequence caution" evidence="3">
    <conflict type="erroneous gene model prediction">
        <sequence resource="EMBL-CDS" id="EFJ05737"/>
    </conflict>
    <text>The predicted gene has been split into 2 genes.</text>
</comment>
<feature type="chain" id="PRO_0000412056" description="CASP-like protein 2U1">
    <location>
        <begin position="1"/>
        <end position="204"/>
    </location>
</feature>
<feature type="topological domain" description="Cytoplasmic" evidence="2">
    <location>
        <begin position="1"/>
        <end position="36"/>
    </location>
</feature>
<feature type="transmembrane region" description="Helical" evidence="2">
    <location>
        <begin position="37"/>
        <end position="57"/>
    </location>
</feature>
<feature type="topological domain" description="Extracellular" evidence="2">
    <location>
        <begin position="58"/>
        <end position="84"/>
    </location>
</feature>
<feature type="transmembrane region" description="Helical" evidence="2">
    <location>
        <begin position="85"/>
        <end position="105"/>
    </location>
</feature>
<feature type="topological domain" description="Cytoplasmic" evidence="2">
    <location>
        <begin position="106"/>
        <end position="117"/>
    </location>
</feature>
<feature type="transmembrane region" description="Helical" evidence="2">
    <location>
        <begin position="118"/>
        <end position="138"/>
    </location>
</feature>
<feature type="topological domain" description="Extracellular" evidence="2">
    <location>
        <begin position="139"/>
        <end position="170"/>
    </location>
</feature>
<feature type="transmembrane region" description="Helical" evidence="2">
    <location>
        <begin position="171"/>
        <end position="191"/>
    </location>
</feature>
<feature type="topological domain" description="Cytoplasmic" evidence="2">
    <location>
        <begin position="192"/>
        <end position="204"/>
    </location>
</feature>
<feature type="glycosylation site" description="N-linked (GlcNAc...) asparagine" evidence="2">
    <location>
        <position position="77"/>
    </location>
</feature>
<proteinExistence type="inferred from homology"/>
<keyword id="KW-1003">Cell membrane</keyword>
<keyword id="KW-0325">Glycoprotein</keyword>
<keyword id="KW-0472">Membrane</keyword>
<keyword id="KW-1185">Reference proteome</keyword>
<keyword id="KW-0812">Transmembrane</keyword>
<keyword id="KW-1133">Transmembrane helix</keyword>
<sequence>MGVLGGDAHVPIGSQVSPGSVVVTNNESFGHRKLLKGVDFLVRIKAFAFCLAVIVLLKNNVQTTVIAPGIVLQAKYNNTKAPVSLLVLASICCGYAFLQAVVSLLSFIRDKRVLNNTVLAWLTFLLDQVLTYLLLGSAAATAEAAYIAKRGEDKVQWKAVCGPFKRFCDHFAATVFLSFIAVIAFAVSAAISAYYLFRRSKGFK</sequence>
<evidence type="ECO:0000250" key="1"/>
<evidence type="ECO:0000255" key="2"/>
<evidence type="ECO:0000305" key="3"/>
<accession>P0DH67</accession>
<accession>D8TC77</accession>
<reference key="1">
    <citation type="journal article" date="2011" name="Science">
        <title>The Selaginella genome identifies genetic changes associated with the evolution of vascular plants.</title>
        <authorList>
            <person name="Banks J.A."/>
            <person name="Nishiyama T."/>
            <person name="Hasebe M."/>
            <person name="Bowman J.L."/>
            <person name="Gribskov M."/>
            <person name="dePamphilis C."/>
            <person name="Albert V.A."/>
            <person name="Aono N."/>
            <person name="Aoyama T."/>
            <person name="Ambrose B.A."/>
            <person name="Ashton N.W."/>
            <person name="Axtell M.J."/>
            <person name="Barker E."/>
            <person name="Barker M.S."/>
            <person name="Bennetzen J.L."/>
            <person name="Bonawitz N.D."/>
            <person name="Chapple C."/>
            <person name="Cheng C."/>
            <person name="Correa L.G."/>
            <person name="Dacre M."/>
            <person name="DeBarry J."/>
            <person name="Dreyer I."/>
            <person name="Elias M."/>
            <person name="Engstrom E.M."/>
            <person name="Estelle M."/>
            <person name="Feng L."/>
            <person name="Finet C."/>
            <person name="Floyd S.K."/>
            <person name="Frommer W.B."/>
            <person name="Fujita T."/>
            <person name="Gramzow L."/>
            <person name="Gutensohn M."/>
            <person name="Harholt J."/>
            <person name="Hattori M."/>
            <person name="Heyl A."/>
            <person name="Hirai T."/>
            <person name="Hiwatashi Y."/>
            <person name="Ishikawa M."/>
            <person name="Iwata M."/>
            <person name="Karol K.G."/>
            <person name="Koehler B."/>
            <person name="Kolukisaoglu U."/>
            <person name="Kubo M."/>
            <person name="Kurata T."/>
            <person name="Lalonde S."/>
            <person name="Li K."/>
            <person name="Li Y."/>
            <person name="Litt A."/>
            <person name="Lyons E."/>
            <person name="Manning G."/>
            <person name="Maruyama T."/>
            <person name="Michael T.P."/>
            <person name="Mikami K."/>
            <person name="Miyazaki S."/>
            <person name="Morinaga S."/>
            <person name="Murata T."/>
            <person name="Mueller-Roeber B."/>
            <person name="Nelson D.R."/>
            <person name="Obara M."/>
            <person name="Oguri Y."/>
            <person name="Olmstead R.G."/>
            <person name="Onodera N."/>
            <person name="Petersen B.L."/>
            <person name="Pils B."/>
            <person name="Prigge M."/>
            <person name="Rensing S.A."/>
            <person name="Riano-Pachon D.M."/>
            <person name="Roberts A.W."/>
            <person name="Sato Y."/>
            <person name="Scheller H.V."/>
            <person name="Schulz B."/>
            <person name="Schulz C."/>
            <person name="Shakirov E.V."/>
            <person name="Shibagaki N."/>
            <person name="Shinohara N."/>
            <person name="Shippen D.E."/>
            <person name="Soerensen I."/>
            <person name="Sotooka R."/>
            <person name="Sugimoto N."/>
            <person name="Sugita M."/>
            <person name="Sumikawa N."/>
            <person name="Tanurdzic M."/>
            <person name="Theissen G."/>
            <person name="Ulvskov P."/>
            <person name="Wakazuki S."/>
            <person name="Weng J.K."/>
            <person name="Willats W.W."/>
            <person name="Wipf D."/>
            <person name="Wolf P.G."/>
            <person name="Yang L."/>
            <person name="Zimmer A.D."/>
            <person name="Zhu Q."/>
            <person name="Mitros T."/>
            <person name="Hellsten U."/>
            <person name="Loque D."/>
            <person name="Otillar R."/>
            <person name="Salamov A."/>
            <person name="Schmutz J."/>
            <person name="Shapiro H."/>
            <person name="Lindquist E."/>
            <person name="Lucas S."/>
            <person name="Rokhsar D."/>
            <person name="Grigoriev I.V."/>
        </authorList>
    </citation>
    <scope>NUCLEOTIDE SEQUENCE [LARGE SCALE GENOMIC DNA]</scope>
</reference>
<reference key="2">
    <citation type="journal article" date="2014" name="Plant Physiol.">
        <title>Functional and evolutionary analysis of the CASPARIAN STRIP MEMBRANE DOMAIN PROTEIN family.</title>
        <authorList>
            <person name="Roppolo D."/>
            <person name="Boeckmann B."/>
            <person name="Pfister A."/>
            <person name="Boutet E."/>
            <person name="Rubio M.C."/>
            <person name="Denervaud-Tendon V."/>
            <person name="Vermeer J.E."/>
            <person name="Gheyselinck J."/>
            <person name="Xenarios I."/>
            <person name="Geldner N."/>
        </authorList>
    </citation>
    <scope>GENE FAMILY</scope>
    <scope>NOMENCLATURE</scope>
</reference>
<organism>
    <name type="scientific">Selaginella moellendorffii</name>
    <name type="common">Spikemoss</name>
    <dbReference type="NCBI Taxonomy" id="88036"/>
    <lineage>
        <taxon>Eukaryota</taxon>
        <taxon>Viridiplantae</taxon>
        <taxon>Streptophyta</taxon>
        <taxon>Embryophyta</taxon>
        <taxon>Tracheophyta</taxon>
        <taxon>Lycopodiopsida</taxon>
        <taxon>Selaginellales</taxon>
        <taxon>Selaginellaceae</taxon>
        <taxon>Selaginella</taxon>
    </lineage>
</organism>
<gene>
    <name type="ORF">SELMODRAFT_431321</name>
</gene>
<dbReference type="EMBL" id="GL377715">
    <property type="protein sequence ID" value="EFJ05737.1"/>
    <property type="status" value="ALT_SEQ"/>
    <property type="molecule type" value="Genomic_DNA"/>
</dbReference>
<dbReference type="HOGENOM" id="CLU_032438_0_0_1"/>
<dbReference type="InParanoid" id="P0DH67"/>
<dbReference type="Proteomes" id="UP000001514">
    <property type="component" value="Unassembled WGS sequence"/>
</dbReference>
<dbReference type="GO" id="GO:0005886">
    <property type="term" value="C:plasma membrane"/>
    <property type="evidence" value="ECO:0007669"/>
    <property type="project" value="UniProtKB-SubCell"/>
</dbReference>
<dbReference type="InterPro" id="IPR006459">
    <property type="entry name" value="CASP/CASPL"/>
</dbReference>
<dbReference type="InterPro" id="IPR006702">
    <property type="entry name" value="CASP_dom"/>
</dbReference>
<dbReference type="NCBIfam" id="TIGR01569">
    <property type="entry name" value="A_tha_TIGR01569"/>
    <property type="match status" value="1"/>
</dbReference>
<dbReference type="PANTHER" id="PTHR33573:SF30">
    <property type="entry name" value="CASP-LIKE PROTEIN 2C1-RELATED"/>
    <property type="match status" value="1"/>
</dbReference>
<dbReference type="PANTHER" id="PTHR33573">
    <property type="entry name" value="CASP-LIKE PROTEIN 4A4"/>
    <property type="match status" value="1"/>
</dbReference>
<dbReference type="Pfam" id="PF04535">
    <property type="entry name" value="CASP_dom"/>
    <property type="match status" value="1"/>
</dbReference>
<protein>
    <recommendedName>
        <fullName>CASP-like protein 2U1</fullName>
        <shortName>SmCASPL2U1</shortName>
    </recommendedName>
</protein>